<comment type="function">
    <text evidence="1">Succinyl-CoA synthetase functions in the citric acid cycle (TCA), coupling the hydrolysis of succinyl-CoA to the synthesis of either ATP or GTP and thus represents the only step of substrate-level phosphorylation in the TCA. The beta subunit provides nucleotide specificity of the enzyme and binds the substrate succinate, while the binding sites for coenzyme A and phosphate are found in the alpha subunit.</text>
</comment>
<comment type="catalytic activity">
    <reaction evidence="1">
        <text>succinate + ATP + CoA = succinyl-CoA + ADP + phosphate</text>
        <dbReference type="Rhea" id="RHEA:17661"/>
        <dbReference type="ChEBI" id="CHEBI:30031"/>
        <dbReference type="ChEBI" id="CHEBI:30616"/>
        <dbReference type="ChEBI" id="CHEBI:43474"/>
        <dbReference type="ChEBI" id="CHEBI:57287"/>
        <dbReference type="ChEBI" id="CHEBI:57292"/>
        <dbReference type="ChEBI" id="CHEBI:456216"/>
        <dbReference type="EC" id="6.2.1.5"/>
    </reaction>
    <physiologicalReaction direction="right-to-left" evidence="1">
        <dbReference type="Rhea" id="RHEA:17663"/>
    </physiologicalReaction>
</comment>
<comment type="catalytic activity">
    <reaction evidence="1">
        <text>GTP + succinate + CoA = succinyl-CoA + GDP + phosphate</text>
        <dbReference type="Rhea" id="RHEA:22120"/>
        <dbReference type="ChEBI" id="CHEBI:30031"/>
        <dbReference type="ChEBI" id="CHEBI:37565"/>
        <dbReference type="ChEBI" id="CHEBI:43474"/>
        <dbReference type="ChEBI" id="CHEBI:57287"/>
        <dbReference type="ChEBI" id="CHEBI:57292"/>
        <dbReference type="ChEBI" id="CHEBI:58189"/>
    </reaction>
    <physiologicalReaction direction="right-to-left" evidence="1">
        <dbReference type="Rhea" id="RHEA:22122"/>
    </physiologicalReaction>
</comment>
<comment type="cofactor">
    <cofactor evidence="1">
        <name>Mg(2+)</name>
        <dbReference type="ChEBI" id="CHEBI:18420"/>
    </cofactor>
    <text evidence="1">Binds 1 Mg(2+) ion per subunit.</text>
</comment>
<comment type="pathway">
    <text evidence="1">Carbohydrate metabolism; tricarboxylic acid cycle; succinate from succinyl-CoA (ligase route): step 1/1.</text>
</comment>
<comment type="subunit">
    <text evidence="1">Heterotetramer of two alpha and two beta subunits.</text>
</comment>
<comment type="similarity">
    <text evidence="1">Belongs to the succinate/malate CoA ligase beta subunit family.</text>
</comment>
<sequence length="386" mass="41881">MHLHEYQAKDLLTSYAIPMPPYRVASSVEEGRHTLNELGINAGVVKVQVHAGGRGKNGGVIVAKSPEEILAAVDQLLHMRFVSNQTSGEALPVEKVLITPLVNIAAEYYLAVIMDRKNRCPTIMLSKAGGVDIEEVAQKYPDQQLTISLTPFARLYNYQLRQMIKFMGWEGDTGKQGVQMIKNLVQCFYDNDASLLEINPLVRTQEGDLLVLDAKVTIDDNALYRHPKLEVLYDPSQENVRDVLAKQIGLSYIALDGNIGCLVNGAGLAMSTLDILKIHGGSAANFLDVGGSATEQQIQEAVSLVLSDENVEVLFINIFGGIMDCSAVASGLVAVMQTRENLIPTVVRLEGTNVELGKEIVQCSGIPCKFTDSLNTGAQLAVALSK</sequence>
<name>SUCC_CHLAB</name>
<dbReference type="EC" id="6.2.1.5" evidence="1"/>
<dbReference type="EMBL" id="CR848038">
    <property type="protein sequence ID" value="CAH64199.1"/>
    <property type="molecule type" value="Genomic_DNA"/>
</dbReference>
<dbReference type="RefSeq" id="WP_011097313.1">
    <property type="nucleotide sequence ID" value="NC_004552.2"/>
</dbReference>
<dbReference type="SMR" id="Q5L593"/>
<dbReference type="KEGG" id="cab:CAB752"/>
<dbReference type="eggNOG" id="COG0045">
    <property type="taxonomic scope" value="Bacteria"/>
</dbReference>
<dbReference type="HOGENOM" id="CLU_037430_0_2_0"/>
<dbReference type="OrthoDB" id="9802602at2"/>
<dbReference type="UniPathway" id="UPA00223">
    <property type="reaction ID" value="UER00999"/>
</dbReference>
<dbReference type="Proteomes" id="UP000001012">
    <property type="component" value="Chromosome"/>
</dbReference>
<dbReference type="GO" id="GO:0005829">
    <property type="term" value="C:cytosol"/>
    <property type="evidence" value="ECO:0007669"/>
    <property type="project" value="TreeGrafter"/>
</dbReference>
<dbReference type="GO" id="GO:0042709">
    <property type="term" value="C:succinate-CoA ligase complex"/>
    <property type="evidence" value="ECO:0007669"/>
    <property type="project" value="TreeGrafter"/>
</dbReference>
<dbReference type="GO" id="GO:0005524">
    <property type="term" value="F:ATP binding"/>
    <property type="evidence" value="ECO:0007669"/>
    <property type="project" value="UniProtKB-UniRule"/>
</dbReference>
<dbReference type="GO" id="GO:0000287">
    <property type="term" value="F:magnesium ion binding"/>
    <property type="evidence" value="ECO:0007669"/>
    <property type="project" value="UniProtKB-UniRule"/>
</dbReference>
<dbReference type="GO" id="GO:0004775">
    <property type="term" value="F:succinate-CoA ligase (ADP-forming) activity"/>
    <property type="evidence" value="ECO:0007669"/>
    <property type="project" value="UniProtKB-UniRule"/>
</dbReference>
<dbReference type="GO" id="GO:0004776">
    <property type="term" value="F:succinate-CoA ligase (GDP-forming) activity"/>
    <property type="evidence" value="ECO:0007669"/>
    <property type="project" value="RHEA"/>
</dbReference>
<dbReference type="GO" id="GO:0006104">
    <property type="term" value="P:succinyl-CoA metabolic process"/>
    <property type="evidence" value="ECO:0007669"/>
    <property type="project" value="TreeGrafter"/>
</dbReference>
<dbReference type="GO" id="GO:0006099">
    <property type="term" value="P:tricarboxylic acid cycle"/>
    <property type="evidence" value="ECO:0007669"/>
    <property type="project" value="UniProtKB-UniRule"/>
</dbReference>
<dbReference type="FunFam" id="3.30.470.20:FF:000002">
    <property type="entry name" value="Succinate--CoA ligase [ADP-forming] subunit beta"/>
    <property type="match status" value="1"/>
</dbReference>
<dbReference type="FunFam" id="3.40.50.261:FF:000001">
    <property type="entry name" value="Succinate--CoA ligase [ADP-forming] subunit beta"/>
    <property type="match status" value="1"/>
</dbReference>
<dbReference type="Gene3D" id="3.30.1490.20">
    <property type="entry name" value="ATP-grasp fold, A domain"/>
    <property type="match status" value="1"/>
</dbReference>
<dbReference type="Gene3D" id="3.30.470.20">
    <property type="entry name" value="ATP-grasp fold, B domain"/>
    <property type="match status" value="1"/>
</dbReference>
<dbReference type="Gene3D" id="3.40.50.261">
    <property type="entry name" value="Succinyl-CoA synthetase domains"/>
    <property type="match status" value="1"/>
</dbReference>
<dbReference type="HAMAP" id="MF_00558">
    <property type="entry name" value="Succ_CoA_beta"/>
    <property type="match status" value="1"/>
</dbReference>
<dbReference type="InterPro" id="IPR011761">
    <property type="entry name" value="ATP-grasp"/>
</dbReference>
<dbReference type="InterPro" id="IPR013650">
    <property type="entry name" value="ATP-grasp_succ-CoA_synth-type"/>
</dbReference>
<dbReference type="InterPro" id="IPR013815">
    <property type="entry name" value="ATP_grasp_subdomain_1"/>
</dbReference>
<dbReference type="InterPro" id="IPR017866">
    <property type="entry name" value="Succ-CoA_synthase_bsu_CS"/>
</dbReference>
<dbReference type="InterPro" id="IPR005811">
    <property type="entry name" value="SUCC_ACL_C"/>
</dbReference>
<dbReference type="InterPro" id="IPR005809">
    <property type="entry name" value="Succ_CoA_ligase-like_bsu"/>
</dbReference>
<dbReference type="InterPro" id="IPR016102">
    <property type="entry name" value="Succinyl-CoA_synth-like"/>
</dbReference>
<dbReference type="NCBIfam" id="NF001913">
    <property type="entry name" value="PRK00696.1"/>
    <property type="match status" value="1"/>
</dbReference>
<dbReference type="NCBIfam" id="TIGR01016">
    <property type="entry name" value="sucCoAbeta"/>
    <property type="match status" value="1"/>
</dbReference>
<dbReference type="PANTHER" id="PTHR11815:SF10">
    <property type="entry name" value="SUCCINATE--COA LIGASE [GDP-FORMING] SUBUNIT BETA, MITOCHONDRIAL"/>
    <property type="match status" value="1"/>
</dbReference>
<dbReference type="PANTHER" id="PTHR11815">
    <property type="entry name" value="SUCCINYL-COA SYNTHETASE BETA CHAIN"/>
    <property type="match status" value="1"/>
</dbReference>
<dbReference type="Pfam" id="PF08442">
    <property type="entry name" value="ATP-grasp_2"/>
    <property type="match status" value="1"/>
</dbReference>
<dbReference type="Pfam" id="PF00549">
    <property type="entry name" value="Ligase_CoA"/>
    <property type="match status" value="1"/>
</dbReference>
<dbReference type="PIRSF" id="PIRSF001554">
    <property type="entry name" value="SucCS_beta"/>
    <property type="match status" value="1"/>
</dbReference>
<dbReference type="SUPFAM" id="SSF56059">
    <property type="entry name" value="Glutathione synthetase ATP-binding domain-like"/>
    <property type="match status" value="1"/>
</dbReference>
<dbReference type="SUPFAM" id="SSF52210">
    <property type="entry name" value="Succinyl-CoA synthetase domains"/>
    <property type="match status" value="1"/>
</dbReference>
<dbReference type="PROSITE" id="PS50975">
    <property type="entry name" value="ATP_GRASP"/>
    <property type="match status" value="1"/>
</dbReference>
<dbReference type="PROSITE" id="PS01217">
    <property type="entry name" value="SUCCINYL_COA_LIG_3"/>
    <property type="match status" value="1"/>
</dbReference>
<proteinExistence type="inferred from homology"/>
<gene>
    <name evidence="1" type="primary">sucC</name>
    <name type="ordered locus">CAB752</name>
</gene>
<evidence type="ECO:0000255" key="1">
    <source>
        <dbReference type="HAMAP-Rule" id="MF_00558"/>
    </source>
</evidence>
<protein>
    <recommendedName>
        <fullName evidence="1">Succinate--CoA ligase [ADP-forming] subunit beta</fullName>
        <ecNumber evidence="1">6.2.1.5</ecNumber>
    </recommendedName>
    <alternativeName>
        <fullName evidence="1">Succinyl-CoA synthetase subunit beta</fullName>
        <shortName evidence="1">SCS-beta</shortName>
    </alternativeName>
</protein>
<keyword id="KW-0067">ATP-binding</keyword>
<keyword id="KW-0436">Ligase</keyword>
<keyword id="KW-0460">Magnesium</keyword>
<keyword id="KW-0479">Metal-binding</keyword>
<keyword id="KW-0547">Nucleotide-binding</keyword>
<keyword id="KW-0816">Tricarboxylic acid cycle</keyword>
<organism>
    <name type="scientific">Chlamydia abortus (strain DSM 27085 / S26/3)</name>
    <name type="common">Chlamydophila abortus</name>
    <dbReference type="NCBI Taxonomy" id="218497"/>
    <lineage>
        <taxon>Bacteria</taxon>
        <taxon>Pseudomonadati</taxon>
        <taxon>Chlamydiota</taxon>
        <taxon>Chlamydiia</taxon>
        <taxon>Chlamydiales</taxon>
        <taxon>Chlamydiaceae</taxon>
        <taxon>Chlamydia/Chlamydophila group</taxon>
        <taxon>Chlamydia</taxon>
    </lineage>
</organism>
<reference key="1">
    <citation type="journal article" date="2005" name="Genome Res.">
        <title>The Chlamydophila abortus genome sequence reveals an array of variable proteins that contribute to interspecies variation.</title>
        <authorList>
            <person name="Thomson N.R."/>
            <person name="Yeats C."/>
            <person name="Bell K."/>
            <person name="Holden M.T.G."/>
            <person name="Bentley S.D."/>
            <person name="Livingstone M."/>
            <person name="Cerdeno-Tarraga A.-M."/>
            <person name="Harris B."/>
            <person name="Doggett J."/>
            <person name="Ormond D."/>
            <person name="Mungall K."/>
            <person name="Clarke K."/>
            <person name="Feltwell T."/>
            <person name="Hance Z."/>
            <person name="Sanders M."/>
            <person name="Quail M.A."/>
            <person name="Price C."/>
            <person name="Barrell B.G."/>
            <person name="Parkhill J."/>
            <person name="Longbottom D."/>
        </authorList>
    </citation>
    <scope>NUCLEOTIDE SEQUENCE [LARGE SCALE GENOMIC DNA]</scope>
    <source>
        <strain>DSM 27085 / S26/3</strain>
    </source>
</reference>
<feature type="chain" id="PRO_1000082059" description="Succinate--CoA ligase [ADP-forming] subunit beta">
    <location>
        <begin position="1"/>
        <end position="386"/>
    </location>
</feature>
<feature type="domain" description="ATP-grasp" evidence="1">
    <location>
        <begin position="9"/>
        <end position="244"/>
    </location>
</feature>
<feature type="binding site" evidence="1">
    <location>
        <position position="46"/>
    </location>
    <ligand>
        <name>ATP</name>
        <dbReference type="ChEBI" id="CHEBI:30616"/>
    </ligand>
</feature>
<feature type="binding site" evidence="1">
    <location>
        <begin position="53"/>
        <end position="55"/>
    </location>
    <ligand>
        <name>ATP</name>
        <dbReference type="ChEBI" id="CHEBI:30616"/>
    </ligand>
</feature>
<feature type="binding site" evidence="1">
    <location>
        <position position="102"/>
    </location>
    <ligand>
        <name>ATP</name>
        <dbReference type="ChEBI" id="CHEBI:30616"/>
    </ligand>
</feature>
<feature type="binding site" evidence="1">
    <location>
        <position position="107"/>
    </location>
    <ligand>
        <name>ATP</name>
        <dbReference type="ChEBI" id="CHEBI:30616"/>
    </ligand>
</feature>
<feature type="binding site" evidence="1">
    <location>
        <position position="199"/>
    </location>
    <ligand>
        <name>Mg(2+)</name>
        <dbReference type="ChEBI" id="CHEBI:18420"/>
    </ligand>
</feature>
<feature type="binding site" evidence="1">
    <location>
        <position position="213"/>
    </location>
    <ligand>
        <name>Mg(2+)</name>
        <dbReference type="ChEBI" id="CHEBI:18420"/>
    </ligand>
</feature>
<feature type="binding site" evidence="1">
    <location>
        <position position="264"/>
    </location>
    <ligand>
        <name>substrate</name>
        <note>ligand shared with subunit alpha</note>
    </ligand>
</feature>
<feature type="binding site" evidence="1">
    <location>
        <begin position="321"/>
        <end position="323"/>
    </location>
    <ligand>
        <name>substrate</name>
        <note>ligand shared with subunit alpha</note>
    </ligand>
</feature>
<accession>Q5L593</accession>